<name>Z324B_HUMAN</name>
<feature type="chain" id="PRO_0000280405" description="Zinc finger protein 324B">
    <location>
        <begin position="1"/>
        <end position="544"/>
    </location>
</feature>
<feature type="domain" description="KRAB" evidence="2">
    <location>
        <begin position="1"/>
        <end position="72"/>
    </location>
</feature>
<feature type="zinc finger region" description="C2H2-type 1" evidence="1">
    <location>
        <begin position="257"/>
        <end position="279"/>
    </location>
</feature>
<feature type="zinc finger region" description="C2H2-type 2" evidence="1">
    <location>
        <begin position="285"/>
        <end position="307"/>
    </location>
</feature>
<feature type="zinc finger region" description="C2H2-type 3" evidence="1">
    <location>
        <begin position="313"/>
        <end position="335"/>
    </location>
</feature>
<feature type="zinc finger region" description="C2H2-type 4" evidence="1">
    <location>
        <begin position="341"/>
        <end position="363"/>
    </location>
</feature>
<feature type="zinc finger region" description="C2H2-type 5" evidence="1">
    <location>
        <begin position="369"/>
        <end position="391"/>
    </location>
</feature>
<feature type="zinc finger region" description="C2H2-type 6" evidence="1">
    <location>
        <begin position="397"/>
        <end position="419"/>
    </location>
</feature>
<feature type="zinc finger region" description="C2H2-type 7" evidence="1">
    <location>
        <begin position="425"/>
        <end position="447"/>
    </location>
</feature>
<feature type="zinc finger region" description="C2H2-type 8" evidence="1">
    <location>
        <begin position="453"/>
        <end position="475"/>
    </location>
</feature>
<feature type="zinc finger region" description="C2H2-type 9" evidence="1">
    <location>
        <begin position="481"/>
        <end position="503"/>
    </location>
</feature>
<feature type="region of interest" description="Disordered" evidence="3">
    <location>
        <begin position="184"/>
        <end position="222"/>
    </location>
</feature>
<feature type="region of interest" description="Disordered" evidence="3">
    <location>
        <begin position="508"/>
        <end position="544"/>
    </location>
</feature>
<feature type="compositionally biased region" description="Basic residues" evidence="3">
    <location>
        <begin position="524"/>
        <end position="533"/>
    </location>
</feature>
<feature type="cross-link" description="Glycyl lysine isopeptide (Lys-Gly) (interchain with G-Cter in SUMO2)" evidence="6">
    <location>
        <position position="214"/>
    </location>
</feature>
<feature type="splice variant" id="VSP_023658" description="In isoform 2." evidence="4">
    <original>MTFEDVAVYFSQEEWGLLDTAQRALYRHVMLENFTLVTSLGLSTSRPRVVIQLERGEEPWVPSGKDMTLARNTYGRLNS</original>
    <variation>MGVPTAVSATPVRADASSKPQPLLQSQPHLFFFPKLLSRLLGSPLPVHSAGPGPLLTRMPQATTVSLRL</variation>
    <location>
        <begin position="1"/>
        <end position="79"/>
    </location>
</feature>
<feature type="sequence variant" id="VAR_052811" description="In dbSNP:rs12611254.">
    <original>S</original>
    <variation>G</variation>
    <location>
        <position position="63"/>
    </location>
</feature>
<feature type="sequence conflict" description="In Ref. 1; BAD18597." evidence="5" ref="1">
    <original>C</original>
    <variation>R</variation>
    <location>
        <position position="402"/>
    </location>
</feature>
<feature type="sequence conflict" description="In Ref. 1; BAC87113." evidence="5" ref="1">
    <original>D</original>
    <variation>G</variation>
    <location>
        <position position="457"/>
    </location>
</feature>
<dbReference type="EMBL" id="AK127750">
    <property type="protein sequence ID" value="BAC87113.1"/>
    <property type="molecule type" value="mRNA"/>
</dbReference>
<dbReference type="EMBL" id="AK131452">
    <property type="protein sequence ID" value="BAD18597.1"/>
    <property type="molecule type" value="mRNA"/>
</dbReference>
<dbReference type="EMBL" id="BX648711">
    <property type="protein sequence ID" value="CAH10556.1"/>
    <property type="molecule type" value="mRNA"/>
</dbReference>
<dbReference type="EMBL" id="BC140881">
    <property type="protein sequence ID" value="AAI40882.1"/>
    <property type="molecule type" value="mRNA"/>
</dbReference>
<dbReference type="EMBL" id="BC140882">
    <property type="protein sequence ID" value="AAI40883.1"/>
    <property type="molecule type" value="mRNA"/>
</dbReference>
<dbReference type="CCDS" id="CCDS33138.1">
    <molecule id="Q6AW86-1"/>
</dbReference>
<dbReference type="RefSeq" id="NP_997278.2">
    <molecule id="Q6AW86-1"/>
    <property type="nucleotide sequence ID" value="NM_207395.3"/>
</dbReference>
<dbReference type="RefSeq" id="XP_005258972.1">
    <molecule id="Q6AW86-1"/>
    <property type="nucleotide sequence ID" value="XM_005258915.5"/>
</dbReference>
<dbReference type="RefSeq" id="XP_005258975.1">
    <molecule id="Q6AW86-1"/>
    <property type="nucleotide sequence ID" value="XM_005258918.5"/>
</dbReference>
<dbReference type="RefSeq" id="XP_047294762.1">
    <molecule id="Q6AW86-1"/>
    <property type="nucleotide sequence ID" value="XM_047438806.1"/>
</dbReference>
<dbReference type="RefSeq" id="XP_047294764.1">
    <molecule id="Q6AW86-1"/>
    <property type="nucleotide sequence ID" value="XM_047438808.1"/>
</dbReference>
<dbReference type="RefSeq" id="XP_047294765.1">
    <molecule id="Q6AW86-1"/>
    <property type="nucleotide sequence ID" value="XM_047438809.1"/>
</dbReference>
<dbReference type="RefSeq" id="XP_054176949.1">
    <molecule id="Q6AW86-1"/>
    <property type="nucleotide sequence ID" value="XM_054320974.1"/>
</dbReference>
<dbReference type="RefSeq" id="XP_054176950.1">
    <molecule id="Q6AW86-1"/>
    <property type="nucleotide sequence ID" value="XM_054320975.1"/>
</dbReference>
<dbReference type="RefSeq" id="XP_054176952.1">
    <molecule id="Q6AW86-1"/>
    <property type="nucleotide sequence ID" value="XM_054320977.1"/>
</dbReference>
<dbReference type="RefSeq" id="XP_054176953.1">
    <molecule id="Q6AW86-1"/>
    <property type="nucleotide sequence ID" value="XM_054320978.1"/>
</dbReference>
<dbReference type="RefSeq" id="XP_054176954.1">
    <molecule id="Q6AW86-1"/>
    <property type="nucleotide sequence ID" value="XM_054320979.1"/>
</dbReference>
<dbReference type="SMR" id="Q6AW86"/>
<dbReference type="BioGRID" id="132751">
    <property type="interactions" value="88"/>
</dbReference>
<dbReference type="ELM" id="Q6AW86"/>
<dbReference type="FunCoup" id="Q6AW86">
    <property type="interactions" value="177"/>
</dbReference>
<dbReference type="IntAct" id="Q6AW86">
    <property type="interactions" value="86"/>
</dbReference>
<dbReference type="STRING" id="9606.ENSP00000337473"/>
<dbReference type="GlyGen" id="Q6AW86">
    <property type="glycosylation" value="1 site"/>
</dbReference>
<dbReference type="iPTMnet" id="Q6AW86"/>
<dbReference type="PhosphoSitePlus" id="Q6AW86"/>
<dbReference type="BioMuta" id="ZNF324B"/>
<dbReference type="DMDM" id="74757410"/>
<dbReference type="jPOST" id="Q6AW86"/>
<dbReference type="MassIVE" id="Q6AW86"/>
<dbReference type="PaxDb" id="9606-ENSP00000337473"/>
<dbReference type="PeptideAtlas" id="Q6AW86"/>
<dbReference type="ProteomicsDB" id="66190">
    <molecule id="Q6AW86-1"/>
</dbReference>
<dbReference type="ProteomicsDB" id="66191">
    <molecule id="Q6AW86-2"/>
</dbReference>
<dbReference type="Pumba" id="Q6AW86"/>
<dbReference type="Antibodypedia" id="52700">
    <property type="antibodies" value="60 antibodies from 14 providers"/>
</dbReference>
<dbReference type="DNASU" id="388569"/>
<dbReference type="Ensembl" id="ENST00000336614.9">
    <molecule id="Q6AW86-1"/>
    <property type="protein sequence ID" value="ENSP00000337473.3"/>
    <property type="gene ID" value="ENSG00000249471.8"/>
</dbReference>
<dbReference type="Ensembl" id="ENST00000545523.5">
    <molecule id="Q6AW86-1"/>
    <property type="protein sequence ID" value="ENSP00000438930.1"/>
    <property type="gene ID" value="ENSG00000249471.8"/>
</dbReference>
<dbReference type="GeneID" id="388569"/>
<dbReference type="KEGG" id="hsa:388569"/>
<dbReference type="MANE-Select" id="ENST00000336614.9">
    <property type="protein sequence ID" value="ENSP00000337473.3"/>
    <property type="RefSeq nucleotide sequence ID" value="NM_207395.3"/>
    <property type="RefSeq protein sequence ID" value="NP_997278.2"/>
</dbReference>
<dbReference type="UCSC" id="uc002qsv.2">
    <molecule id="Q6AW86-1"/>
    <property type="organism name" value="human"/>
</dbReference>
<dbReference type="AGR" id="HGNC:33107"/>
<dbReference type="CTD" id="388569"/>
<dbReference type="DisGeNET" id="388569"/>
<dbReference type="GeneCards" id="ZNF324B"/>
<dbReference type="HGNC" id="HGNC:33107">
    <property type="gene designation" value="ZNF324B"/>
</dbReference>
<dbReference type="HPA" id="ENSG00000249471">
    <property type="expression patterns" value="Low tissue specificity"/>
</dbReference>
<dbReference type="neXtProt" id="NX_Q6AW86"/>
<dbReference type="OpenTargets" id="ENSG00000249471"/>
<dbReference type="PharmGKB" id="PA162410082"/>
<dbReference type="VEuPathDB" id="HostDB:ENSG00000249471"/>
<dbReference type="eggNOG" id="KOG1721">
    <property type="taxonomic scope" value="Eukaryota"/>
</dbReference>
<dbReference type="GeneTree" id="ENSGT00940000163047"/>
<dbReference type="HOGENOM" id="CLU_002678_0_2_1"/>
<dbReference type="InParanoid" id="Q6AW86"/>
<dbReference type="OMA" id="PERQKSC"/>
<dbReference type="OrthoDB" id="3437960at2759"/>
<dbReference type="PAN-GO" id="Q6AW86">
    <property type="GO annotations" value="4 GO annotations based on evolutionary models"/>
</dbReference>
<dbReference type="PhylomeDB" id="Q6AW86"/>
<dbReference type="TreeFam" id="TF337574"/>
<dbReference type="PathwayCommons" id="Q6AW86"/>
<dbReference type="Reactome" id="R-HSA-212436">
    <property type="pathway name" value="Generic Transcription Pathway"/>
</dbReference>
<dbReference type="SignaLink" id="Q6AW86"/>
<dbReference type="BioGRID-ORCS" id="388569">
    <property type="hits" value="18 hits in 1176 CRISPR screens"/>
</dbReference>
<dbReference type="GenomeRNAi" id="388569"/>
<dbReference type="Pharos" id="Q6AW86">
    <property type="development level" value="Tdark"/>
</dbReference>
<dbReference type="PRO" id="PR:Q6AW86"/>
<dbReference type="Proteomes" id="UP000005640">
    <property type="component" value="Chromosome 19"/>
</dbReference>
<dbReference type="RNAct" id="Q6AW86">
    <property type="molecule type" value="protein"/>
</dbReference>
<dbReference type="Bgee" id="ENSG00000249471">
    <property type="expression patterns" value="Expressed in male germ line stem cell (sensu Vertebrata) in testis and 95 other cell types or tissues"/>
</dbReference>
<dbReference type="ExpressionAtlas" id="Q6AW86">
    <property type="expression patterns" value="baseline and differential"/>
</dbReference>
<dbReference type="GO" id="GO:0005634">
    <property type="term" value="C:nucleus"/>
    <property type="evidence" value="ECO:0000318"/>
    <property type="project" value="GO_Central"/>
</dbReference>
<dbReference type="GO" id="GO:0000981">
    <property type="term" value="F:DNA-binding transcription factor activity, RNA polymerase II-specific"/>
    <property type="evidence" value="ECO:0000318"/>
    <property type="project" value="GO_Central"/>
</dbReference>
<dbReference type="GO" id="GO:0000978">
    <property type="term" value="F:RNA polymerase II cis-regulatory region sequence-specific DNA binding"/>
    <property type="evidence" value="ECO:0000318"/>
    <property type="project" value="GO_Central"/>
</dbReference>
<dbReference type="GO" id="GO:0008270">
    <property type="term" value="F:zinc ion binding"/>
    <property type="evidence" value="ECO:0007669"/>
    <property type="project" value="UniProtKB-KW"/>
</dbReference>
<dbReference type="GO" id="GO:0006357">
    <property type="term" value="P:regulation of transcription by RNA polymerase II"/>
    <property type="evidence" value="ECO:0000318"/>
    <property type="project" value="GO_Central"/>
</dbReference>
<dbReference type="CDD" id="cd07765">
    <property type="entry name" value="KRAB_A-box"/>
    <property type="match status" value="1"/>
</dbReference>
<dbReference type="FunFam" id="3.30.160.60:FF:000045">
    <property type="entry name" value="ZFP69 zinc finger protein B"/>
    <property type="match status" value="1"/>
</dbReference>
<dbReference type="FunFam" id="3.30.160.60:FF:000358">
    <property type="entry name" value="zinc finger protein 24"/>
    <property type="match status" value="1"/>
</dbReference>
<dbReference type="FunFam" id="3.30.160.60:FF:000185">
    <property type="entry name" value="zinc finger protein 319"/>
    <property type="match status" value="1"/>
</dbReference>
<dbReference type="FunFam" id="3.30.160.60:FF:001472">
    <property type="entry name" value="Zinc finger protein 324"/>
    <property type="match status" value="1"/>
</dbReference>
<dbReference type="FunFam" id="3.30.160.60:FF:001471">
    <property type="entry name" value="Zinc finger protein 324A"/>
    <property type="match status" value="1"/>
</dbReference>
<dbReference type="FunFam" id="3.30.160.60:FF:001765">
    <property type="entry name" value="zinc finger protein 324A"/>
    <property type="match status" value="1"/>
</dbReference>
<dbReference type="FunFam" id="3.30.160.60:FF:000200">
    <property type="entry name" value="zinc finger protein 510 isoform X2"/>
    <property type="match status" value="1"/>
</dbReference>
<dbReference type="FunFam" id="3.30.160.60:FF:000281">
    <property type="entry name" value="Zinc finger protein 558 isoform X1"/>
    <property type="match status" value="1"/>
</dbReference>
<dbReference type="FunFam" id="3.30.160.60:FF:000410">
    <property type="entry name" value="Zinc finger protein 777"/>
    <property type="match status" value="1"/>
</dbReference>
<dbReference type="Gene3D" id="6.10.140.140">
    <property type="match status" value="1"/>
</dbReference>
<dbReference type="Gene3D" id="3.30.160.60">
    <property type="entry name" value="Classic Zinc Finger"/>
    <property type="match status" value="9"/>
</dbReference>
<dbReference type="InterPro" id="IPR001909">
    <property type="entry name" value="KRAB"/>
</dbReference>
<dbReference type="InterPro" id="IPR036051">
    <property type="entry name" value="KRAB_dom_sf"/>
</dbReference>
<dbReference type="InterPro" id="IPR036236">
    <property type="entry name" value="Znf_C2H2_sf"/>
</dbReference>
<dbReference type="InterPro" id="IPR013087">
    <property type="entry name" value="Znf_C2H2_type"/>
</dbReference>
<dbReference type="PANTHER" id="PTHR23235:SF178">
    <property type="entry name" value="C2H2-TYPE DOMAIN-CONTAINING PROTEIN-RELATED"/>
    <property type="match status" value="1"/>
</dbReference>
<dbReference type="PANTHER" id="PTHR23235">
    <property type="entry name" value="KRUEPPEL-LIKE TRANSCRIPTION FACTOR"/>
    <property type="match status" value="1"/>
</dbReference>
<dbReference type="Pfam" id="PF01352">
    <property type="entry name" value="KRAB"/>
    <property type="match status" value="1"/>
</dbReference>
<dbReference type="Pfam" id="PF00096">
    <property type="entry name" value="zf-C2H2"/>
    <property type="match status" value="8"/>
</dbReference>
<dbReference type="SMART" id="SM00349">
    <property type="entry name" value="KRAB"/>
    <property type="match status" value="1"/>
</dbReference>
<dbReference type="SMART" id="SM00355">
    <property type="entry name" value="ZnF_C2H2"/>
    <property type="match status" value="9"/>
</dbReference>
<dbReference type="SUPFAM" id="SSF57667">
    <property type="entry name" value="beta-beta-alpha zinc fingers"/>
    <property type="match status" value="5"/>
</dbReference>
<dbReference type="SUPFAM" id="SSF109640">
    <property type="entry name" value="KRAB domain (Kruppel-associated box)"/>
    <property type="match status" value="1"/>
</dbReference>
<dbReference type="PROSITE" id="PS50805">
    <property type="entry name" value="KRAB"/>
    <property type="match status" value="1"/>
</dbReference>
<dbReference type="PROSITE" id="PS00028">
    <property type="entry name" value="ZINC_FINGER_C2H2_1"/>
    <property type="match status" value="9"/>
</dbReference>
<dbReference type="PROSITE" id="PS50157">
    <property type="entry name" value="ZINC_FINGER_C2H2_2"/>
    <property type="match status" value="9"/>
</dbReference>
<protein>
    <recommendedName>
        <fullName>Zinc finger protein 324B</fullName>
    </recommendedName>
</protein>
<organism>
    <name type="scientific">Homo sapiens</name>
    <name type="common">Human</name>
    <dbReference type="NCBI Taxonomy" id="9606"/>
    <lineage>
        <taxon>Eukaryota</taxon>
        <taxon>Metazoa</taxon>
        <taxon>Chordata</taxon>
        <taxon>Craniata</taxon>
        <taxon>Vertebrata</taxon>
        <taxon>Euteleostomi</taxon>
        <taxon>Mammalia</taxon>
        <taxon>Eutheria</taxon>
        <taxon>Euarchontoglires</taxon>
        <taxon>Primates</taxon>
        <taxon>Haplorrhini</taxon>
        <taxon>Catarrhini</taxon>
        <taxon>Hominidae</taxon>
        <taxon>Homo</taxon>
    </lineage>
</organism>
<gene>
    <name type="primary">ZNF324B</name>
</gene>
<proteinExistence type="evidence at protein level"/>
<evidence type="ECO:0000255" key="1">
    <source>
        <dbReference type="PROSITE-ProRule" id="PRU00042"/>
    </source>
</evidence>
<evidence type="ECO:0000255" key="2">
    <source>
        <dbReference type="PROSITE-ProRule" id="PRU00119"/>
    </source>
</evidence>
<evidence type="ECO:0000256" key="3">
    <source>
        <dbReference type="SAM" id="MobiDB-lite"/>
    </source>
</evidence>
<evidence type="ECO:0000303" key="4">
    <source>
    </source>
</evidence>
<evidence type="ECO:0000305" key="5"/>
<evidence type="ECO:0007744" key="6">
    <source>
    </source>
</evidence>
<keyword id="KW-0025">Alternative splicing</keyword>
<keyword id="KW-0238">DNA-binding</keyword>
<keyword id="KW-1017">Isopeptide bond</keyword>
<keyword id="KW-0479">Metal-binding</keyword>
<keyword id="KW-0539">Nucleus</keyword>
<keyword id="KW-1267">Proteomics identification</keyword>
<keyword id="KW-1185">Reference proteome</keyword>
<keyword id="KW-0677">Repeat</keyword>
<keyword id="KW-0804">Transcription</keyword>
<keyword id="KW-0805">Transcription regulation</keyword>
<keyword id="KW-0832">Ubl conjugation</keyword>
<keyword id="KW-0862">Zinc</keyword>
<keyword id="KW-0863">Zinc-finger</keyword>
<sequence>MTFEDVAVYFSQEEWGLLDTAQRALYRHVMLENFTLVTSLGLSTSRPRVVIQLERGEEPWVPSGKDMTLARNTYGRLNSGSWSLTEDRDVSGEWPRAFPDTPPGMTTSVFPVADACHSVKSLQRQPGASPSQERKPTGVSVIYWERLLLGSRSDQASISLRLTSPLRPPKSSRPREKTFTEYRVPGRQPRTPERQKPCAQEVPGRAFGNASDLKAASGGRDRRMGAAWQEPHRLLGGQEPSTWDELGEALHAGEKSFECRACSKVFVKSSDLLKHLRTHTGERPYECTQCGKAFSQTSHLTQHQRIHSGETPYACPVCGKAFRHSSSLVRHQRIHTAEKSFRCSECGKAFSHGSNLSQHRKIHAGGRPYACAQCGRRFCRNSHLIQHERTHTGEKPFVCALCGAAFSQGSSLFLHQRVHTGEKPFACAQCGRSFSRSSNLTQHQLLHTGERPFRCVDCGKGFAKGAVLLSHRRIHTGEKPFVCTQCGRAFRERPALLHHQRIHTTEKTNAAAPDCTPGPGFLQGHHRKVRRGGKPSPVLKPAKV</sequence>
<reference key="1">
    <citation type="journal article" date="2004" name="Nat. Genet.">
        <title>Complete sequencing and characterization of 21,243 full-length human cDNAs.</title>
        <authorList>
            <person name="Ota T."/>
            <person name="Suzuki Y."/>
            <person name="Nishikawa T."/>
            <person name="Otsuki T."/>
            <person name="Sugiyama T."/>
            <person name="Irie R."/>
            <person name="Wakamatsu A."/>
            <person name="Hayashi K."/>
            <person name="Sato H."/>
            <person name="Nagai K."/>
            <person name="Kimura K."/>
            <person name="Makita H."/>
            <person name="Sekine M."/>
            <person name="Obayashi M."/>
            <person name="Nishi T."/>
            <person name="Shibahara T."/>
            <person name="Tanaka T."/>
            <person name="Ishii S."/>
            <person name="Yamamoto J."/>
            <person name="Saito K."/>
            <person name="Kawai Y."/>
            <person name="Isono Y."/>
            <person name="Nakamura Y."/>
            <person name="Nagahari K."/>
            <person name="Murakami K."/>
            <person name="Yasuda T."/>
            <person name="Iwayanagi T."/>
            <person name="Wagatsuma M."/>
            <person name="Shiratori A."/>
            <person name="Sudo H."/>
            <person name="Hosoiri T."/>
            <person name="Kaku Y."/>
            <person name="Kodaira H."/>
            <person name="Kondo H."/>
            <person name="Sugawara M."/>
            <person name="Takahashi M."/>
            <person name="Kanda K."/>
            <person name="Yokoi T."/>
            <person name="Furuya T."/>
            <person name="Kikkawa E."/>
            <person name="Omura Y."/>
            <person name="Abe K."/>
            <person name="Kamihara K."/>
            <person name="Katsuta N."/>
            <person name="Sato K."/>
            <person name="Tanikawa M."/>
            <person name="Yamazaki M."/>
            <person name="Ninomiya K."/>
            <person name="Ishibashi T."/>
            <person name="Yamashita H."/>
            <person name="Murakawa K."/>
            <person name="Fujimori K."/>
            <person name="Tanai H."/>
            <person name="Kimata M."/>
            <person name="Watanabe M."/>
            <person name="Hiraoka S."/>
            <person name="Chiba Y."/>
            <person name="Ishida S."/>
            <person name="Ono Y."/>
            <person name="Takiguchi S."/>
            <person name="Watanabe S."/>
            <person name="Yosida M."/>
            <person name="Hotuta T."/>
            <person name="Kusano J."/>
            <person name="Kanehori K."/>
            <person name="Takahashi-Fujii A."/>
            <person name="Hara H."/>
            <person name="Tanase T.-O."/>
            <person name="Nomura Y."/>
            <person name="Togiya S."/>
            <person name="Komai F."/>
            <person name="Hara R."/>
            <person name="Takeuchi K."/>
            <person name="Arita M."/>
            <person name="Imose N."/>
            <person name="Musashino K."/>
            <person name="Yuuki H."/>
            <person name="Oshima A."/>
            <person name="Sasaki N."/>
            <person name="Aotsuka S."/>
            <person name="Yoshikawa Y."/>
            <person name="Matsunawa H."/>
            <person name="Ichihara T."/>
            <person name="Shiohata N."/>
            <person name="Sano S."/>
            <person name="Moriya S."/>
            <person name="Momiyama H."/>
            <person name="Satoh N."/>
            <person name="Takami S."/>
            <person name="Terashima Y."/>
            <person name="Suzuki O."/>
            <person name="Nakagawa S."/>
            <person name="Senoh A."/>
            <person name="Mizoguchi H."/>
            <person name="Goto Y."/>
            <person name="Shimizu F."/>
            <person name="Wakebe H."/>
            <person name="Hishigaki H."/>
            <person name="Watanabe T."/>
            <person name="Sugiyama A."/>
            <person name="Takemoto M."/>
            <person name="Kawakami B."/>
            <person name="Yamazaki M."/>
            <person name="Watanabe K."/>
            <person name="Kumagai A."/>
            <person name="Itakura S."/>
            <person name="Fukuzumi Y."/>
            <person name="Fujimori Y."/>
            <person name="Komiyama M."/>
            <person name="Tashiro H."/>
            <person name="Tanigami A."/>
            <person name="Fujiwara T."/>
            <person name="Ono T."/>
            <person name="Yamada K."/>
            <person name="Fujii Y."/>
            <person name="Ozaki K."/>
            <person name="Hirao M."/>
            <person name="Ohmori Y."/>
            <person name="Kawabata A."/>
            <person name="Hikiji T."/>
            <person name="Kobatake N."/>
            <person name="Inagaki H."/>
            <person name="Ikema Y."/>
            <person name="Okamoto S."/>
            <person name="Okitani R."/>
            <person name="Kawakami T."/>
            <person name="Noguchi S."/>
            <person name="Itoh T."/>
            <person name="Shigeta K."/>
            <person name="Senba T."/>
            <person name="Matsumura K."/>
            <person name="Nakajima Y."/>
            <person name="Mizuno T."/>
            <person name="Morinaga M."/>
            <person name="Sasaki M."/>
            <person name="Togashi T."/>
            <person name="Oyama M."/>
            <person name="Hata H."/>
            <person name="Watanabe M."/>
            <person name="Komatsu T."/>
            <person name="Mizushima-Sugano J."/>
            <person name="Satoh T."/>
            <person name="Shirai Y."/>
            <person name="Takahashi Y."/>
            <person name="Nakagawa K."/>
            <person name="Okumura K."/>
            <person name="Nagase T."/>
            <person name="Nomura N."/>
            <person name="Kikuchi H."/>
            <person name="Masuho Y."/>
            <person name="Yamashita R."/>
            <person name="Nakai K."/>
            <person name="Yada T."/>
            <person name="Nakamura Y."/>
            <person name="Ohara O."/>
            <person name="Isogai T."/>
            <person name="Sugano S."/>
        </authorList>
    </citation>
    <scope>NUCLEOTIDE SEQUENCE [LARGE SCALE MRNA] (ISOFORMS 1 AND 2)</scope>
    <source>
        <tissue>Brain</tissue>
        <tissue>Testis</tissue>
    </source>
</reference>
<reference key="2">
    <citation type="journal article" date="2007" name="BMC Genomics">
        <title>The full-ORF clone resource of the German cDNA consortium.</title>
        <authorList>
            <person name="Bechtel S."/>
            <person name="Rosenfelder H."/>
            <person name="Duda A."/>
            <person name="Schmidt C.P."/>
            <person name="Ernst U."/>
            <person name="Wellenreuther R."/>
            <person name="Mehrle A."/>
            <person name="Schuster C."/>
            <person name="Bahr A."/>
            <person name="Bloecker H."/>
            <person name="Heubner D."/>
            <person name="Hoerlein A."/>
            <person name="Michel G."/>
            <person name="Wedler H."/>
            <person name="Koehrer K."/>
            <person name="Ottenwaelder B."/>
            <person name="Poustka A."/>
            <person name="Wiemann S."/>
            <person name="Schupp I."/>
        </authorList>
    </citation>
    <scope>NUCLEOTIDE SEQUENCE [LARGE SCALE MRNA] (ISOFORM 1)</scope>
    <source>
        <tissue>Endometrial adenocarcinoma</tissue>
    </source>
</reference>
<reference key="3">
    <citation type="journal article" date="2004" name="Genome Res.">
        <title>The status, quality, and expansion of the NIH full-length cDNA project: the Mammalian Gene Collection (MGC).</title>
        <authorList>
            <consortium name="The MGC Project Team"/>
        </authorList>
    </citation>
    <scope>NUCLEOTIDE SEQUENCE [LARGE SCALE MRNA] (ISOFORM 1)</scope>
</reference>
<reference key="4">
    <citation type="journal article" date="2014" name="Nat. Struct. Mol. Biol.">
        <title>Uncovering global SUMOylation signaling networks in a site-specific manner.</title>
        <authorList>
            <person name="Hendriks I.A."/>
            <person name="D'Souza R.C."/>
            <person name="Yang B."/>
            <person name="Verlaan-de Vries M."/>
            <person name="Mann M."/>
            <person name="Vertegaal A.C."/>
        </authorList>
    </citation>
    <scope>SUMOYLATION [LARGE SCALE ANALYSIS] AT LYS-214</scope>
    <scope>IDENTIFICATION BY MASS SPECTROMETRY [LARGE SCALE ANALYSIS]</scope>
</reference>
<comment type="function">
    <text>May be involved in transcriptional regulation.</text>
</comment>
<comment type="subcellular location">
    <subcellularLocation>
        <location evidence="5">Nucleus</location>
    </subcellularLocation>
</comment>
<comment type="alternative products">
    <event type="alternative splicing"/>
    <isoform>
        <id>Q6AW86-1</id>
        <name>1</name>
        <sequence type="displayed"/>
    </isoform>
    <isoform>
        <id>Q6AW86-2</id>
        <name>2</name>
        <sequence type="described" ref="VSP_023658"/>
    </isoform>
</comment>
<comment type="similarity">
    <text evidence="5">Belongs to the krueppel C2H2-type zinc-finger protein family.</text>
</comment>
<accession>Q6AW86</accession>
<accession>B2RTZ6</accession>
<accession>Q6ZMX8</accession>
<accession>Q6ZS42</accession>